<reference key="1">
    <citation type="journal article" date="2003" name="Proc. Natl. Acad. Sci. U.S.A.">
        <title>The genome sequence of Blochmannia floridanus: comparative analysis of reduced genomes.</title>
        <authorList>
            <person name="Gil R."/>
            <person name="Silva F.J."/>
            <person name="Zientz E."/>
            <person name="Delmotte F."/>
            <person name="Gonzalez-Candelas F."/>
            <person name="Latorre A."/>
            <person name="Rausell C."/>
            <person name="Kamerbeek J."/>
            <person name="Gadau J."/>
            <person name="Hoelldobler B."/>
            <person name="van Ham R.C.H.J."/>
            <person name="Gross R."/>
            <person name="Moya A."/>
        </authorList>
    </citation>
    <scope>NUCLEOTIDE SEQUENCE [LARGE SCALE GENOMIC DNA]</scope>
</reference>
<organism>
    <name type="scientific">Blochmanniella floridana</name>
    <dbReference type="NCBI Taxonomy" id="203907"/>
    <lineage>
        <taxon>Bacteria</taxon>
        <taxon>Pseudomonadati</taxon>
        <taxon>Pseudomonadota</taxon>
        <taxon>Gammaproteobacteria</taxon>
        <taxon>Enterobacterales</taxon>
        <taxon>Enterobacteriaceae</taxon>
        <taxon>ant endosymbionts</taxon>
        <taxon>Candidatus Blochmanniella</taxon>
    </lineage>
</organism>
<name>SYL_BLOFL</name>
<feature type="chain" id="PRO_0000151994" description="Leucine--tRNA ligase">
    <location>
        <begin position="1"/>
        <end position="867"/>
    </location>
</feature>
<feature type="short sequence motif" description="'HIGH' region">
    <location>
        <begin position="42"/>
        <end position="52"/>
    </location>
</feature>
<feature type="short sequence motif" description="'KMSKS' region">
    <location>
        <begin position="625"/>
        <end position="629"/>
    </location>
</feature>
<feature type="binding site" evidence="1">
    <location>
        <position position="628"/>
    </location>
    <ligand>
        <name>ATP</name>
        <dbReference type="ChEBI" id="CHEBI:30616"/>
    </ligand>
</feature>
<gene>
    <name evidence="1" type="primary">leuS</name>
    <name type="ordered locus">Bfl313</name>
</gene>
<dbReference type="EC" id="6.1.1.4" evidence="1"/>
<dbReference type="EMBL" id="BX248583">
    <property type="protein sequence ID" value="CAD83383.1"/>
    <property type="molecule type" value="Genomic_DNA"/>
</dbReference>
<dbReference type="SMR" id="Q7VRA6"/>
<dbReference type="STRING" id="203907.Bfl313"/>
<dbReference type="KEGG" id="bfl:Bfl313"/>
<dbReference type="eggNOG" id="COG0495">
    <property type="taxonomic scope" value="Bacteria"/>
</dbReference>
<dbReference type="HOGENOM" id="CLU_004427_0_0_6"/>
<dbReference type="OrthoDB" id="9810365at2"/>
<dbReference type="Proteomes" id="UP000002192">
    <property type="component" value="Chromosome"/>
</dbReference>
<dbReference type="GO" id="GO:0005829">
    <property type="term" value="C:cytosol"/>
    <property type="evidence" value="ECO:0007669"/>
    <property type="project" value="TreeGrafter"/>
</dbReference>
<dbReference type="GO" id="GO:0002161">
    <property type="term" value="F:aminoacyl-tRNA deacylase activity"/>
    <property type="evidence" value="ECO:0007669"/>
    <property type="project" value="InterPro"/>
</dbReference>
<dbReference type="GO" id="GO:0005524">
    <property type="term" value="F:ATP binding"/>
    <property type="evidence" value="ECO:0007669"/>
    <property type="project" value="UniProtKB-UniRule"/>
</dbReference>
<dbReference type="GO" id="GO:0004823">
    <property type="term" value="F:leucine-tRNA ligase activity"/>
    <property type="evidence" value="ECO:0007669"/>
    <property type="project" value="UniProtKB-UniRule"/>
</dbReference>
<dbReference type="GO" id="GO:0006429">
    <property type="term" value="P:leucyl-tRNA aminoacylation"/>
    <property type="evidence" value="ECO:0007669"/>
    <property type="project" value="UniProtKB-UniRule"/>
</dbReference>
<dbReference type="CDD" id="cd07958">
    <property type="entry name" value="Anticodon_Ia_Leu_BEm"/>
    <property type="match status" value="1"/>
</dbReference>
<dbReference type="CDD" id="cd00812">
    <property type="entry name" value="LeuRS_core"/>
    <property type="match status" value="1"/>
</dbReference>
<dbReference type="FunFam" id="1.10.730.10:FF:000003">
    <property type="entry name" value="Leucine--tRNA ligase"/>
    <property type="match status" value="1"/>
</dbReference>
<dbReference type="FunFam" id="2.20.28.290:FF:000001">
    <property type="entry name" value="Leucine--tRNA ligase"/>
    <property type="match status" value="1"/>
</dbReference>
<dbReference type="FunFam" id="3.40.50.620:FF:000003">
    <property type="entry name" value="Leucine--tRNA ligase"/>
    <property type="match status" value="1"/>
</dbReference>
<dbReference type="Gene3D" id="2.20.28.290">
    <property type="match status" value="1"/>
</dbReference>
<dbReference type="Gene3D" id="3.10.20.590">
    <property type="match status" value="1"/>
</dbReference>
<dbReference type="Gene3D" id="3.40.50.620">
    <property type="entry name" value="HUPs"/>
    <property type="match status" value="2"/>
</dbReference>
<dbReference type="Gene3D" id="1.10.730.10">
    <property type="entry name" value="Isoleucyl-tRNA Synthetase, Domain 1"/>
    <property type="match status" value="2"/>
</dbReference>
<dbReference type="HAMAP" id="MF_00049_B">
    <property type="entry name" value="Leu_tRNA_synth_B"/>
    <property type="match status" value="1"/>
</dbReference>
<dbReference type="InterPro" id="IPR001412">
    <property type="entry name" value="aa-tRNA-synth_I_CS"/>
</dbReference>
<dbReference type="InterPro" id="IPR002300">
    <property type="entry name" value="aa-tRNA-synth_Ia"/>
</dbReference>
<dbReference type="InterPro" id="IPR002302">
    <property type="entry name" value="Leu-tRNA-ligase"/>
</dbReference>
<dbReference type="InterPro" id="IPR025709">
    <property type="entry name" value="Leu_tRNA-synth_edit"/>
</dbReference>
<dbReference type="InterPro" id="IPR013155">
    <property type="entry name" value="M/V/L/I-tRNA-synth_anticd-bd"/>
</dbReference>
<dbReference type="InterPro" id="IPR015413">
    <property type="entry name" value="Methionyl/Leucyl_tRNA_Synth"/>
</dbReference>
<dbReference type="InterPro" id="IPR014729">
    <property type="entry name" value="Rossmann-like_a/b/a_fold"/>
</dbReference>
<dbReference type="InterPro" id="IPR009080">
    <property type="entry name" value="tRNAsynth_Ia_anticodon-bd"/>
</dbReference>
<dbReference type="InterPro" id="IPR009008">
    <property type="entry name" value="Val/Leu/Ile-tRNA-synth_edit"/>
</dbReference>
<dbReference type="NCBIfam" id="TIGR00396">
    <property type="entry name" value="leuS_bact"/>
    <property type="match status" value="1"/>
</dbReference>
<dbReference type="PANTHER" id="PTHR43740:SF2">
    <property type="entry name" value="LEUCINE--TRNA LIGASE, MITOCHONDRIAL"/>
    <property type="match status" value="1"/>
</dbReference>
<dbReference type="PANTHER" id="PTHR43740">
    <property type="entry name" value="LEUCYL-TRNA SYNTHETASE"/>
    <property type="match status" value="1"/>
</dbReference>
<dbReference type="Pfam" id="PF08264">
    <property type="entry name" value="Anticodon_1"/>
    <property type="match status" value="1"/>
</dbReference>
<dbReference type="Pfam" id="PF00133">
    <property type="entry name" value="tRNA-synt_1"/>
    <property type="match status" value="2"/>
</dbReference>
<dbReference type="Pfam" id="PF13603">
    <property type="entry name" value="tRNA-synt_1_2"/>
    <property type="match status" value="1"/>
</dbReference>
<dbReference type="Pfam" id="PF09334">
    <property type="entry name" value="tRNA-synt_1g"/>
    <property type="match status" value="1"/>
</dbReference>
<dbReference type="PRINTS" id="PR00985">
    <property type="entry name" value="TRNASYNTHLEU"/>
</dbReference>
<dbReference type="SUPFAM" id="SSF47323">
    <property type="entry name" value="Anticodon-binding domain of a subclass of class I aminoacyl-tRNA synthetases"/>
    <property type="match status" value="1"/>
</dbReference>
<dbReference type="SUPFAM" id="SSF52374">
    <property type="entry name" value="Nucleotidylyl transferase"/>
    <property type="match status" value="1"/>
</dbReference>
<dbReference type="SUPFAM" id="SSF50677">
    <property type="entry name" value="ValRS/IleRS/LeuRS editing domain"/>
    <property type="match status" value="1"/>
</dbReference>
<dbReference type="PROSITE" id="PS00178">
    <property type="entry name" value="AA_TRNA_LIGASE_I"/>
    <property type="match status" value="1"/>
</dbReference>
<proteinExistence type="inferred from homology"/>
<sequence length="867" mass="101320">MKKLYFPHQIERIVQQHWNDNQTFSVTEDKNKQKFYCLSMLPYPSGNLHMGHVRNYTIGDVISRYQRMLGKNVLQPIGWDAFGLPAEQAAIIHKKNPSDWTYSNIQYMKQQLKSLGFAYDWKRELITNDPQYYRWEQWFFIILYEKGLVYRKTTLVNWCPYHNTVLANEQVINGGCWRCHTKIQYKKIPQWFIKITHYADQLLNGLNQLQYWPEQVKTMQRNWIGQSTGTNVIFKILNSNITTITVYIARLDTFMGISYLTISVDHPITLQIAKINPDLANFISIYNTISIQLHNKQFICHKKKGIFTNLYAVHPITFTKLPIWVANFITPLEFDGQGAIASCPAHDQHDWEFAHQYDLPIKPVIKYADGELPNITNQAMIEPGILFNSDNFDDLTSHTAINYISKKLIDLKIAKTKIFYHLQDWGVSRQRYWGVPIPMIKLKNGIIQPVPKSELPVILPEIIYTKNNENNILSKNFNWTHTTYKNQDVIRDTDTFDTFMESSWYYARYTCPHYHDGMLQSDAANYWLPIDQYIGGIEHATMHLMYFRFYHKLMRDIGLIQSNEPAIRLLCQGMILADSFYYISNDGQKNWVSPNKVISTRDKMGHIIKSIDADGNNVIYAGLCKMSKSKNNGIDPNAMIQKYGADAVRFFIMFAAPAHSTLEWKESGIEGALRFLKRLWNITYQHIQNGLIHQLNMYKLENKHKIIRQKVHETIIKVTDDIDRRQSFNTALAAIMKLFNDIQDIFPINNTQDRSVLHEALSIIVKLLYPFTPHISYILWKELGYTNTIDDTTWPTPDLQAIQTQEILIIVQINGKKKKKIFVPINSDKNTIHEIAKQAIYQDKNLESKYVHKIIYIPNKIINFITK</sequence>
<evidence type="ECO:0000255" key="1">
    <source>
        <dbReference type="HAMAP-Rule" id="MF_00049"/>
    </source>
</evidence>
<protein>
    <recommendedName>
        <fullName evidence="1">Leucine--tRNA ligase</fullName>
        <ecNumber evidence="1">6.1.1.4</ecNumber>
    </recommendedName>
    <alternativeName>
        <fullName evidence="1">Leucyl-tRNA synthetase</fullName>
        <shortName evidence="1">LeuRS</shortName>
    </alternativeName>
</protein>
<accession>Q7VRA6</accession>
<comment type="catalytic activity">
    <reaction evidence="1">
        <text>tRNA(Leu) + L-leucine + ATP = L-leucyl-tRNA(Leu) + AMP + diphosphate</text>
        <dbReference type="Rhea" id="RHEA:11688"/>
        <dbReference type="Rhea" id="RHEA-COMP:9613"/>
        <dbReference type="Rhea" id="RHEA-COMP:9622"/>
        <dbReference type="ChEBI" id="CHEBI:30616"/>
        <dbReference type="ChEBI" id="CHEBI:33019"/>
        <dbReference type="ChEBI" id="CHEBI:57427"/>
        <dbReference type="ChEBI" id="CHEBI:78442"/>
        <dbReference type="ChEBI" id="CHEBI:78494"/>
        <dbReference type="ChEBI" id="CHEBI:456215"/>
        <dbReference type="EC" id="6.1.1.4"/>
    </reaction>
</comment>
<comment type="subcellular location">
    <subcellularLocation>
        <location evidence="1">Cytoplasm</location>
    </subcellularLocation>
</comment>
<comment type="similarity">
    <text evidence="1">Belongs to the class-I aminoacyl-tRNA synthetase family.</text>
</comment>
<keyword id="KW-0030">Aminoacyl-tRNA synthetase</keyword>
<keyword id="KW-0067">ATP-binding</keyword>
<keyword id="KW-0963">Cytoplasm</keyword>
<keyword id="KW-0436">Ligase</keyword>
<keyword id="KW-0547">Nucleotide-binding</keyword>
<keyword id="KW-0648">Protein biosynthesis</keyword>
<keyword id="KW-1185">Reference proteome</keyword>